<reference key="1">
    <citation type="journal article" date="2007" name="J. Bacteriol.">
        <title>Genome of the opportunistic pathogen Streptococcus sanguinis.</title>
        <authorList>
            <person name="Xu P."/>
            <person name="Alves J.M."/>
            <person name="Kitten T."/>
            <person name="Brown A."/>
            <person name="Chen Z."/>
            <person name="Ozaki L.S."/>
            <person name="Manque P."/>
            <person name="Ge X."/>
            <person name="Serrano M.G."/>
            <person name="Puiu D."/>
            <person name="Hendricks S."/>
            <person name="Wang Y."/>
            <person name="Chaplin M.D."/>
            <person name="Akan D."/>
            <person name="Paik S."/>
            <person name="Peterson D.L."/>
            <person name="Macrina F.L."/>
            <person name="Buck G.A."/>
        </authorList>
    </citation>
    <scope>NUCLEOTIDE SEQUENCE [LARGE SCALE GENOMIC DNA]</scope>
    <source>
        <strain>SK36</strain>
    </source>
</reference>
<sequence>MSSSYINVIGAGLAGSEAAYQIAKRGIPVKLYEMRGVKSTPQHKTADFAELVCSNSLRGDALTNAVGLLKEEMRRLDSVILKSAEATRVPAGGALAVDREGFSQMVTELVTNHPLIEVIREEITEIPEDAITVIATGPLTSDALAEKIHALNGGDGFYFYDAAAPIIDVNTIDMTKVYLKSRYDKGEAAYLNAPMTKQEFMDFHDALVNAEEAPLNSFEKEKYFEGCMPIEVMAKRGIKTMLYGPMKPVGLEYPDDYQGPRDGEYKTPYAVVQLRQDNAAGSLYNIVGFQTHLKWGEQKRVFQMIPGLENAEFVRYGVMHRNSYMDSPNLLEQTFRSKKLPNLFFAGQMTGVEGYVESAASGLVAGINAARLFKGEEALVFPETTAIGSLPHYVTHADSKHFQPMNVNFGIIKELDGPRIRDKKERYEKIAERALQDLQPYLDK</sequence>
<comment type="function">
    <text evidence="1">Catalyzes the folate-dependent formation of 5-methyl-uridine at position 54 (M-5-U54) in all tRNAs.</text>
</comment>
<comment type="catalytic activity">
    <reaction evidence="1">
        <text>uridine(54) in tRNA + (6R)-5,10-methylene-5,6,7,8-tetrahydrofolate + NADH + H(+) = 5-methyluridine(54) in tRNA + (6S)-5,6,7,8-tetrahydrofolate + NAD(+)</text>
        <dbReference type="Rhea" id="RHEA:16873"/>
        <dbReference type="Rhea" id="RHEA-COMP:10167"/>
        <dbReference type="Rhea" id="RHEA-COMP:10193"/>
        <dbReference type="ChEBI" id="CHEBI:15378"/>
        <dbReference type="ChEBI" id="CHEBI:15636"/>
        <dbReference type="ChEBI" id="CHEBI:57453"/>
        <dbReference type="ChEBI" id="CHEBI:57540"/>
        <dbReference type="ChEBI" id="CHEBI:57945"/>
        <dbReference type="ChEBI" id="CHEBI:65315"/>
        <dbReference type="ChEBI" id="CHEBI:74447"/>
        <dbReference type="EC" id="2.1.1.74"/>
    </reaction>
</comment>
<comment type="catalytic activity">
    <reaction evidence="1">
        <text>uridine(54) in tRNA + (6R)-5,10-methylene-5,6,7,8-tetrahydrofolate + NADPH + H(+) = 5-methyluridine(54) in tRNA + (6S)-5,6,7,8-tetrahydrofolate + NADP(+)</text>
        <dbReference type="Rhea" id="RHEA:62372"/>
        <dbReference type="Rhea" id="RHEA-COMP:10167"/>
        <dbReference type="Rhea" id="RHEA-COMP:10193"/>
        <dbReference type="ChEBI" id="CHEBI:15378"/>
        <dbReference type="ChEBI" id="CHEBI:15636"/>
        <dbReference type="ChEBI" id="CHEBI:57453"/>
        <dbReference type="ChEBI" id="CHEBI:57783"/>
        <dbReference type="ChEBI" id="CHEBI:58349"/>
        <dbReference type="ChEBI" id="CHEBI:65315"/>
        <dbReference type="ChEBI" id="CHEBI:74447"/>
        <dbReference type="EC" id="2.1.1.74"/>
    </reaction>
</comment>
<comment type="cofactor">
    <cofactor evidence="1">
        <name>FAD</name>
        <dbReference type="ChEBI" id="CHEBI:57692"/>
    </cofactor>
</comment>
<comment type="subcellular location">
    <subcellularLocation>
        <location evidence="1">Cytoplasm</location>
    </subcellularLocation>
</comment>
<comment type="similarity">
    <text evidence="1">Belongs to the MnmG family. TrmFO subfamily.</text>
</comment>
<name>TRMFO_STRSV</name>
<accession>A3CN32</accession>
<organism>
    <name type="scientific">Streptococcus sanguinis (strain SK36)</name>
    <dbReference type="NCBI Taxonomy" id="388919"/>
    <lineage>
        <taxon>Bacteria</taxon>
        <taxon>Bacillati</taxon>
        <taxon>Bacillota</taxon>
        <taxon>Bacilli</taxon>
        <taxon>Lactobacillales</taxon>
        <taxon>Streptococcaceae</taxon>
        <taxon>Streptococcus</taxon>
    </lineage>
</organism>
<dbReference type="EC" id="2.1.1.74" evidence="1"/>
<dbReference type="EMBL" id="CP000387">
    <property type="protein sequence ID" value="ABN44587.1"/>
    <property type="molecule type" value="Genomic_DNA"/>
</dbReference>
<dbReference type="RefSeq" id="WP_011836971.1">
    <property type="nucleotide sequence ID" value="NC_009009.1"/>
</dbReference>
<dbReference type="RefSeq" id="YP_001035137.1">
    <property type="nucleotide sequence ID" value="NC_009009.1"/>
</dbReference>
<dbReference type="SMR" id="A3CN32"/>
<dbReference type="STRING" id="388919.SSA_1182"/>
<dbReference type="KEGG" id="ssa:SSA_1182"/>
<dbReference type="PATRIC" id="fig|388919.9.peg.1124"/>
<dbReference type="eggNOG" id="COG1206">
    <property type="taxonomic scope" value="Bacteria"/>
</dbReference>
<dbReference type="HOGENOM" id="CLU_033057_1_0_9"/>
<dbReference type="OrthoDB" id="9803114at2"/>
<dbReference type="Proteomes" id="UP000002148">
    <property type="component" value="Chromosome"/>
</dbReference>
<dbReference type="GO" id="GO:0005829">
    <property type="term" value="C:cytosol"/>
    <property type="evidence" value="ECO:0007669"/>
    <property type="project" value="TreeGrafter"/>
</dbReference>
<dbReference type="GO" id="GO:0050660">
    <property type="term" value="F:flavin adenine dinucleotide binding"/>
    <property type="evidence" value="ECO:0007669"/>
    <property type="project" value="UniProtKB-UniRule"/>
</dbReference>
<dbReference type="GO" id="GO:0047151">
    <property type="term" value="F:tRNA (uracil(54)-C5)-methyltransferase activity, 5,10-methylenetetrahydrofolate-dependent"/>
    <property type="evidence" value="ECO:0007669"/>
    <property type="project" value="UniProtKB-UniRule"/>
</dbReference>
<dbReference type="GO" id="GO:0030488">
    <property type="term" value="P:tRNA methylation"/>
    <property type="evidence" value="ECO:0007669"/>
    <property type="project" value="TreeGrafter"/>
</dbReference>
<dbReference type="GO" id="GO:0002098">
    <property type="term" value="P:tRNA wobble uridine modification"/>
    <property type="evidence" value="ECO:0007669"/>
    <property type="project" value="TreeGrafter"/>
</dbReference>
<dbReference type="FunFam" id="3.50.50.60:FF:000035">
    <property type="entry name" value="Methylenetetrahydrofolate--tRNA-(uracil-5-)-methyltransferase TrmFO"/>
    <property type="match status" value="1"/>
</dbReference>
<dbReference type="FunFam" id="3.50.50.60:FF:000040">
    <property type="entry name" value="Methylenetetrahydrofolate--tRNA-(uracil-5-)-methyltransferase TrmFO"/>
    <property type="match status" value="1"/>
</dbReference>
<dbReference type="Gene3D" id="3.50.50.60">
    <property type="entry name" value="FAD/NAD(P)-binding domain"/>
    <property type="match status" value="2"/>
</dbReference>
<dbReference type="HAMAP" id="MF_01037">
    <property type="entry name" value="TrmFO"/>
    <property type="match status" value="1"/>
</dbReference>
<dbReference type="InterPro" id="IPR036188">
    <property type="entry name" value="FAD/NAD-bd_sf"/>
</dbReference>
<dbReference type="InterPro" id="IPR002218">
    <property type="entry name" value="MnmG-rel"/>
</dbReference>
<dbReference type="InterPro" id="IPR020595">
    <property type="entry name" value="MnmG-rel_CS"/>
</dbReference>
<dbReference type="InterPro" id="IPR040131">
    <property type="entry name" value="MnmG_N"/>
</dbReference>
<dbReference type="InterPro" id="IPR004417">
    <property type="entry name" value="TrmFO"/>
</dbReference>
<dbReference type="NCBIfam" id="TIGR00137">
    <property type="entry name" value="gid_trmFO"/>
    <property type="match status" value="1"/>
</dbReference>
<dbReference type="NCBIfam" id="NF003739">
    <property type="entry name" value="PRK05335.1"/>
    <property type="match status" value="1"/>
</dbReference>
<dbReference type="PANTHER" id="PTHR11806">
    <property type="entry name" value="GLUCOSE INHIBITED DIVISION PROTEIN A"/>
    <property type="match status" value="1"/>
</dbReference>
<dbReference type="PANTHER" id="PTHR11806:SF2">
    <property type="entry name" value="METHYLENETETRAHYDROFOLATE--TRNA-(URACIL-5-)-METHYLTRANSFERASE TRMFO"/>
    <property type="match status" value="1"/>
</dbReference>
<dbReference type="Pfam" id="PF01134">
    <property type="entry name" value="GIDA"/>
    <property type="match status" value="1"/>
</dbReference>
<dbReference type="SUPFAM" id="SSF51905">
    <property type="entry name" value="FAD/NAD(P)-binding domain"/>
    <property type="match status" value="1"/>
</dbReference>
<dbReference type="PROSITE" id="PS01281">
    <property type="entry name" value="GIDA_2"/>
    <property type="match status" value="1"/>
</dbReference>
<gene>
    <name evidence="1" type="primary">trmFO</name>
    <name type="synonym">gid</name>
    <name type="ordered locus">SSA_1182</name>
</gene>
<feature type="chain" id="PRO_1000063938" description="Methylenetetrahydrofolate--tRNA-(uracil-5-)-methyltransferase TrmFO">
    <location>
        <begin position="1"/>
        <end position="444"/>
    </location>
</feature>
<feature type="binding site" evidence="1">
    <location>
        <begin position="10"/>
        <end position="15"/>
    </location>
    <ligand>
        <name>FAD</name>
        <dbReference type="ChEBI" id="CHEBI:57692"/>
    </ligand>
</feature>
<evidence type="ECO:0000255" key="1">
    <source>
        <dbReference type="HAMAP-Rule" id="MF_01037"/>
    </source>
</evidence>
<keyword id="KW-0963">Cytoplasm</keyword>
<keyword id="KW-0274">FAD</keyword>
<keyword id="KW-0285">Flavoprotein</keyword>
<keyword id="KW-0489">Methyltransferase</keyword>
<keyword id="KW-0520">NAD</keyword>
<keyword id="KW-0521">NADP</keyword>
<keyword id="KW-1185">Reference proteome</keyword>
<keyword id="KW-0808">Transferase</keyword>
<keyword id="KW-0819">tRNA processing</keyword>
<protein>
    <recommendedName>
        <fullName evidence="1">Methylenetetrahydrofolate--tRNA-(uracil-5-)-methyltransferase TrmFO</fullName>
        <ecNumber evidence="1">2.1.1.74</ecNumber>
    </recommendedName>
    <alternativeName>
        <fullName evidence="1">Folate-dependent tRNA (uracil-5-)-methyltransferase</fullName>
    </alternativeName>
    <alternativeName>
        <fullName evidence="1">Folate-dependent tRNA(M-5-U54)-methyltransferase</fullName>
    </alternativeName>
</protein>
<proteinExistence type="inferred from homology"/>